<sequence>MIKLKIKTGDIVRVIAGDHKGAEGKVVKVDREKNKAIVEGVNMVSKHTKPSAKSPQGGIVKKEAPIQISNVSLIDPKTKEATRVGIRVEGDKKVRFSKKSNQVL</sequence>
<protein>
    <recommendedName>
        <fullName evidence="1">Large ribosomal subunit protein uL24</fullName>
    </recommendedName>
    <alternativeName>
        <fullName evidence="2">50S ribosomal protein L24</fullName>
    </alternativeName>
</protein>
<feature type="chain" id="PRO_1000052214" description="Large ribosomal subunit protein uL24">
    <location>
        <begin position="1"/>
        <end position="104"/>
    </location>
</feature>
<comment type="function">
    <text evidence="1">One of two assembly initiator proteins, it binds directly to the 5'-end of the 23S rRNA, where it nucleates assembly of the 50S subunit.</text>
</comment>
<comment type="function">
    <text evidence="1">One of the proteins that surrounds the polypeptide exit tunnel on the outside of the subunit.</text>
</comment>
<comment type="subunit">
    <text evidence="1">Part of the 50S ribosomal subunit.</text>
</comment>
<comment type="similarity">
    <text evidence="1">Belongs to the universal ribosomal protein uL24 family.</text>
</comment>
<name>RL24_FLAPJ</name>
<gene>
    <name evidence="1" type="primary">rplX</name>
    <name type="ordered locus">FP1328</name>
</gene>
<keyword id="KW-1185">Reference proteome</keyword>
<keyword id="KW-0687">Ribonucleoprotein</keyword>
<keyword id="KW-0689">Ribosomal protein</keyword>
<keyword id="KW-0694">RNA-binding</keyword>
<keyword id="KW-0699">rRNA-binding</keyword>
<evidence type="ECO:0000255" key="1">
    <source>
        <dbReference type="HAMAP-Rule" id="MF_01326"/>
    </source>
</evidence>
<evidence type="ECO:0000305" key="2"/>
<proteinExistence type="inferred from homology"/>
<organism>
    <name type="scientific">Flavobacterium psychrophilum (strain ATCC 49511 / DSM 21280 / CIP 103535 / JIP02/86)</name>
    <dbReference type="NCBI Taxonomy" id="402612"/>
    <lineage>
        <taxon>Bacteria</taxon>
        <taxon>Pseudomonadati</taxon>
        <taxon>Bacteroidota</taxon>
        <taxon>Flavobacteriia</taxon>
        <taxon>Flavobacteriales</taxon>
        <taxon>Flavobacteriaceae</taxon>
        <taxon>Flavobacterium</taxon>
    </lineage>
</organism>
<accession>A6GZ88</accession>
<reference key="1">
    <citation type="journal article" date="2007" name="Nat. Biotechnol.">
        <title>Complete genome sequence of the fish pathogen Flavobacterium psychrophilum.</title>
        <authorList>
            <person name="Duchaud E."/>
            <person name="Boussaha M."/>
            <person name="Loux V."/>
            <person name="Bernardet J.-F."/>
            <person name="Michel C."/>
            <person name="Kerouault B."/>
            <person name="Mondot S."/>
            <person name="Nicolas P."/>
            <person name="Bossy R."/>
            <person name="Caron C."/>
            <person name="Bessieres P."/>
            <person name="Gibrat J.-F."/>
            <person name="Claverol S."/>
            <person name="Dumetz F."/>
            <person name="Le Henaff M."/>
            <person name="Benmansour A."/>
        </authorList>
    </citation>
    <scope>NUCLEOTIDE SEQUENCE [LARGE SCALE GENOMIC DNA]</scope>
    <source>
        <strain>ATCC 49511 / DSM 21280 / CIP 103535 / JIP02/86</strain>
    </source>
</reference>
<dbReference type="EMBL" id="AM398681">
    <property type="protein sequence ID" value="CAL43411.1"/>
    <property type="molecule type" value="Genomic_DNA"/>
</dbReference>
<dbReference type="RefSeq" id="WP_011963459.1">
    <property type="nucleotide sequence ID" value="NC_009613.3"/>
</dbReference>
<dbReference type="RefSeq" id="YP_001296222.1">
    <property type="nucleotide sequence ID" value="NC_009613.3"/>
</dbReference>
<dbReference type="SMR" id="A6GZ88"/>
<dbReference type="STRING" id="402612.FP1328"/>
<dbReference type="EnsemblBacteria" id="CAL43411">
    <property type="protein sequence ID" value="CAL43411"/>
    <property type="gene ID" value="FP1328"/>
</dbReference>
<dbReference type="GeneID" id="66553231"/>
<dbReference type="KEGG" id="fps:FP1328"/>
<dbReference type="PATRIC" id="fig|402612.5.peg.1345"/>
<dbReference type="eggNOG" id="COG0198">
    <property type="taxonomic scope" value="Bacteria"/>
</dbReference>
<dbReference type="HOGENOM" id="CLU_093315_2_0_10"/>
<dbReference type="OrthoDB" id="9807419at2"/>
<dbReference type="Proteomes" id="UP000006394">
    <property type="component" value="Chromosome"/>
</dbReference>
<dbReference type="GO" id="GO:1990904">
    <property type="term" value="C:ribonucleoprotein complex"/>
    <property type="evidence" value="ECO:0007669"/>
    <property type="project" value="UniProtKB-KW"/>
</dbReference>
<dbReference type="GO" id="GO:0005840">
    <property type="term" value="C:ribosome"/>
    <property type="evidence" value="ECO:0007669"/>
    <property type="project" value="UniProtKB-KW"/>
</dbReference>
<dbReference type="GO" id="GO:0019843">
    <property type="term" value="F:rRNA binding"/>
    <property type="evidence" value="ECO:0007669"/>
    <property type="project" value="UniProtKB-UniRule"/>
</dbReference>
<dbReference type="GO" id="GO:0003735">
    <property type="term" value="F:structural constituent of ribosome"/>
    <property type="evidence" value="ECO:0007669"/>
    <property type="project" value="InterPro"/>
</dbReference>
<dbReference type="GO" id="GO:0006412">
    <property type="term" value="P:translation"/>
    <property type="evidence" value="ECO:0007669"/>
    <property type="project" value="UniProtKB-UniRule"/>
</dbReference>
<dbReference type="CDD" id="cd06089">
    <property type="entry name" value="KOW_RPL26"/>
    <property type="match status" value="1"/>
</dbReference>
<dbReference type="FunFam" id="2.30.30.30:FF:000004">
    <property type="entry name" value="50S ribosomal protein L24"/>
    <property type="match status" value="1"/>
</dbReference>
<dbReference type="Gene3D" id="2.30.30.30">
    <property type="match status" value="1"/>
</dbReference>
<dbReference type="HAMAP" id="MF_01326_B">
    <property type="entry name" value="Ribosomal_uL24_B"/>
    <property type="match status" value="1"/>
</dbReference>
<dbReference type="InterPro" id="IPR005824">
    <property type="entry name" value="KOW"/>
</dbReference>
<dbReference type="InterPro" id="IPR014722">
    <property type="entry name" value="Rib_uL2_dom2"/>
</dbReference>
<dbReference type="InterPro" id="IPR003256">
    <property type="entry name" value="Ribosomal_uL24"/>
</dbReference>
<dbReference type="InterPro" id="IPR005825">
    <property type="entry name" value="Ribosomal_uL24_CS"/>
</dbReference>
<dbReference type="InterPro" id="IPR041988">
    <property type="entry name" value="Ribosomal_uL24_KOW"/>
</dbReference>
<dbReference type="InterPro" id="IPR008991">
    <property type="entry name" value="Translation_prot_SH3-like_sf"/>
</dbReference>
<dbReference type="NCBIfam" id="TIGR01079">
    <property type="entry name" value="rplX_bact"/>
    <property type="match status" value="1"/>
</dbReference>
<dbReference type="PANTHER" id="PTHR12903">
    <property type="entry name" value="MITOCHONDRIAL RIBOSOMAL PROTEIN L24"/>
    <property type="match status" value="1"/>
</dbReference>
<dbReference type="Pfam" id="PF00467">
    <property type="entry name" value="KOW"/>
    <property type="match status" value="1"/>
</dbReference>
<dbReference type="Pfam" id="PF17136">
    <property type="entry name" value="ribosomal_L24"/>
    <property type="match status" value="1"/>
</dbReference>
<dbReference type="SMART" id="SM00739">
    <property type="entry name" value="KOW"/>
    <property type="match status" value="1"/>
</dbReference>
<dbReference type="SUPFAM" id="SSF50104">
    <property type="entry name" value="Translation proteins SH3-like domain"/>
    <property type="match status" value="1"/>
</dbReference>
<dbReference type="PROSITE" id="PS01108">
    <property type="entry name" value="RIBOSOMAL_L24"/>
    <property type="match status" value="1"/>
</dbReference>